<comment type="function">
    <text evidence="4">Catalyzes the aldol-type condensation of 2-oxoglutarate with acetyl-CoA to yield homocitrate. Carries out the first step of the alpha-aminoadipate (AAA) lysine biosynthesis pathway.</text>
</comment>
<comment type="catalytic activity">
    <reaction evidence="4">
        <text>acetyl-CoA + 2-oxoglutarate + H2O = (2R)-homocitrate + CoA + H(+)</text>
        <dbReference type="Rhea" id="RHEA:12929"/>
        <dbReference type="ChEBI" id="CHEBI:15377"/>
        <dbReference type="ChEBI" id="CHEBI:15378"/>
        <dbReference type="ChEBI" id="CHEBI:16810"/>
        <dbReference type="ChEBI" id="CHEBI:57287"/>
        <dbReference type="ChEBI" id="CHEBI:57288"/>
        <dbReference type="ChEBI" id="CHEBI:58884"/>
        <dbReference type="EC" id="2.3.3.14"/>
    </reaction>
    <physiologicalReaction direction="left-to-right" evidence="7">
        <dbReference type="Rhea" id="RHEA:12930"/>
    </physiologicalReaction>
</comment>
<comment type="cofactor">
    <cofactor evidence="1">
        <name>Mg(2+)</name>
        <dbReference type="ChEBI" id="CHEBI:18420"/>
    </cofactor>
    <cofactor evidence="1">
        <name>Mn(2+)</name>
        <dbReference type="ChEBI" id="CHEBI:29035"/>
    </cofactor>
</comment>
<comment type="activity regulation">
    <text evidence="4">Inhibited by lysine.</text>
</comment>
<comment type="biophysicochemical properties">
    <kinetics>
        <KM evidence="4">2.7 uM for 2-oxoglutarate</KM>
        <KM evidence="4">2.6 uM for acetyl-CoA</KM>
        <text evidence="4">kcat is 1.4 sec(-1).</text>
    </kinetics>
</comment>
<comment type="pathway">
    <text evidence="7">Amino-acid biosynthesis; L-lysine biosynthesis via AAA pathway; L-alpha-aminoadipate from 2-oxoglutarate: step 1/5.</text>
</comment>
<comment type="subunit">
    <text evidence="4">Forms a homotetramer in the absence of lysine, and is in hexadecamer-octamer equilibrium in the presence of lysine.</text>
</comment>
<comment type="domain">
    <text evidence="4">Contains an N-terminal catalytic domain fused with a RAM (Regulation of Amino acid Metabolism) domain at the C-terminus. The mutant enzyme lacking the RAM domain is insensitive to inhibition by lysine, indicating that the RAM domain is responsible for enzyme allosteric regulation. Moreover, the mutant enzyme lacking the RAM domain forms homodimer irrespective of the presence of lysine, which suggests that HCS undergoes changes in its oligomeric state by binding lysine at its RAM domain.</text>
</comment>
<comment type="similarity">
    <text evidence="2 6">Belongs to the alpha-IPM synthase/homocitrate synthase family. Homocitrate synthase LYS20/LYS21 subfamily.</text>
</comment>
<feature type="chain" id="PRO_0000140426" description="Homocitrate synthase">
    <location>
        <begin position="1"/>
        <end position="460"/>
    </location>
</feature>
<feature type="domain" description="Pyruvate carboxyltransferase" evidence="3">
    <location>
        <begin position="3"/>
        <end position="258"/>
    </location>
</feature>
<feature type="active site" description="Proton acceptor" evidence="1">
    <location>
        <position position="291"/>
    </location>
</feature>
<feature type="binding site" evidence="1">
    <location>
        <position position="11"/>
    </location>
    <ligand>
        <name>2-oxoglutarate</name>
        <dbReference type="ChEBI" id="CHEBI:16810"/>
    </ligand>
</feature>
<feature type="binding site" evidence="1">
    <location>
        <position position="12"/>
    </location>
    <ligand>
        <name>Mg(2+)</name>
        <dbReference type="ChEBI" id="CHEBI:18420"/>
    </ligand>
</feature>
<feature type="binding site" evidence="1">
    <location>
        <position position="75"/>
    </location>
    <ligand>
        <name>2-oxoglutarate</name>
        <dbReference type="ChEBI" id="CHEBI:16810"/>
    </ligand>
</feature>
<feature type="binding site" evidence="1">
    <location>
        <position position="135"/>
    </location>
    <ligand>
        <name>2-oxoglutarate</name>
        <dbReference type="ChEBI" id="CHEBI:16810"/>
    </ligand>
</feature>
<feature type="binding site" evidence="1">
    <location>
        <position position="169"/>
    </location>
    <ligand>
        <name>2-oxoglutarate</name>
        <dbReference type="ChEBI" id="CHEBI:16810"/>
    </ligand>
</feature>
<feature type="binding site" evidence="1">
    <location>
        <position position="197"/>
    </location>
    <ligand>
        <name>Mg(2+)</name>
        <dbReference type="ChEBI" id="CHEBI:18420"/>
    </ligand>
</feature>
<feature type="binding site" evidence="1">
    <location>
        <position position="199"/>
    </location>
    <ligand>
        <name>Mg(2+)</name>
        <dbReference type="ChEBI" id="CHEBI:18420"/>
    </ligand>
</feature>
<gene>
    <name type="ordered locus">STK_13010</name>
</gene>
<sequence>MKVGILDSTLREGEQTPGVVFTIDQRVEIAKALSDVGVQMIEAGHPAVSSDIYEGIKRIMKLKREGLITSEIVGHSRAVKKDIEVAAELEVDRIAIFYGVSDIHLKAKHHVTREEALNIIAETISYAKSHGVKVRFTAEDGSRTDLDYLIKVCKTARDAGADRVSIADTVGILYPTKTRELFSTLVREVPGLEFDIHAHNDLGLAVANALAAIEGGATIIHTTVNGLGERVGIVPLQVIAAAIKYHFGIEVVKLNKLQQLASLVEKYSGIPMPPNYPITGDYAFIHKAGIHVAGVLNDPSTYEFMPPETFGRSRDYVIDKYTGKHALKDRFEKLGVKLSDVELDQVLAKIKSNPNVRFYRDVDLLEIAESVTGRVLKPKPPENIEALISVKCESNVYTTAVTRRLSVIPGVKEVMEISGDYDILVKVEAKDPNELNQIIENIRAVKGVSSTLTSLVLKKM</sequence>
<proteinExistence type="evidence at protein level"/>
<evidence type="ECO:0000250" key="1">
    <source>
        <dbReference type="UniProtKB" id="O87198"/>
    </source>
</evidence>
<evidence type="ECO:0000255" key="2">
    <source>
        <dbReference type="HAMAP-Rule" id="MF_02222"/>
    </source>
</evidence>
<evidence type="ECO:0000255" key="3">
    <source>
        <dbReference type="PROSITE-ProRule" id="PRU01151"/>
    </source>
</evidence>
<evidence type="ECO:0000269" key="4">
    <source>
    </source>
</evidence>
<evidence type="ECO:0000303" key="5">
    <source>
    </source>
</evidence>
<evidence type="ECO:0000305" key="6"/>
<evidence type="ECO:0000305" key="7">
    <source>
    </source>
</evidence>
<protein>
    <recommendedName>
        <fullName evidence="5">Homocitrate synthase</fullName>
        <shortName evidence="5">HCS</shortName>
        <ecNumber evidence="4">2.3.3.14</ecNumber>
    </recommendedName>
</protein>
<dbReference type="EC" id="2.3.3.14" evidence="4"/>
<dbReference type="EMBL" id="BA000023">
    <property type="protein sequence ID" value="BAB66345.1"/>
    <property type="molecule type" value="Genomic_DNA"/>
</dbReference>
<dbReference type="SMR" id="Q971S5"/>
<dbReference type="STRING" id="273063.STK_13010"/>
<dbReference type="KEGG" id="sto:STK_13010"/>
<dbReference type="PATRIC" id="fig|273063.9.peg.1464"/>
<dbReference type="eggNOG" id="arCOG02092">
    <property type="taxonomic scope" value="Archaea"/>
</dbReference>
<dbReference type="OrthoDB" id="6555at2157"/>
<dbReference type="UniPathway" id="UPA00033">
    <property type="reaction ID" value="UER00028"/>
</dbReference>
<dbReference type="Proteomes" id="UP000001015">
    <property type="component" value="Chromosome"/>
</dbReference>
<dbReference type="GO" id="GO:0003852">
    <property type="term" value="F:2-isopropylmalate synthase activity"/>
    <property type="evidence" value="ECO:0007669"/>
    <property type="project" value="TreeGrafter"/>
</dbReference>
<dbReference type="GO" id="GO:0004410">
    <property type="term" value="F:homocitrate synthase activity"/>
    <property type="evidence" value="ECO:0007669"/>
    <property type="project" value="UniProtKB-UniRule"/>
</dbReference>
<dbReference type="GO" id="GO:0046872">
    <property type="term" value="F:metal ion binding"/>
    <property type="evidence" value="ECO:0007669"/>
    <property type="project" value="UniProtKB-KW"/>
</dbReference>
<dbReference type="GO" id="GO:0009098">
    <property type="term" value="P:L-leucine biosynthetic process"/>
    <property type="evidence" value="ECO:0007669"/>
    <property type="project" value="TreeGrafter"/>
</dbReference>
<dbReference type="GO" id="GO:0019878">
    <property type="term" value="P:lysine biosynthetic process via aminoadipic acid"/>
    <property type="evidence" value="ECO:0007669"/>
    <property type="project" value="UniProtKB-UniRule"/>
</dbReference>
<dbReference type="CDD" id="cd07940">
    <property type="entry name" value="DRE_TIM_IPMS"/>
    <property type="match status" value="1"/>
</dbReference>
<dbReference type="Gene3D" id="1.10.238.260">
    <property type="match status" value="1"/>
</dbReference>
<dbReference type="Gene3D" id="3.30.70.920">
    <property type="match status" value="1"/>
</dbReference>
<dbReference type="Gene3D" id="3.20.20.70">
    <property type="entry name" value="Aldolase class I"/>
    <property type="match status" value="1"/>
</dbReference>
<dbReference type="HAMAP" id="MF_02222">
    <property type="entry name" value="Homocitr_synth_fung_arch"/>
    <property type="match status" value="1"/>
</dbReference>
<dbReference type="InterPro" id="IPR050073">
    <property type="entry name" value="2-IPM_HCS-like"/>
</dbReference>
<dbReference type="InterPro" id="IPR002034">
    <property type="entry name" value="AIPM/Hcit_synth_CS"/>
</dbReference>
<dbReference type="InterPro" id="IPR013785">
    <property type="entry name" value="Aldolase_TIM"/>
</dbReference>
<dbReference type="InterPro" id="IPR011008">
    <property type="entry name" value="Dimeric_a/b-barrel"/>
</dbReference>
<dbReference type="InterPro" id="IPR011872">
    <property type="entry name" value="Homocitrate_synth"/>
</dbReference>
<dbReference type="InterPro" id="IPR054691">
    <property type="entry name" value="LeuA/HCS_post-cat"/>
</dbReference>
<dbReference type="InterPro" id="IPR000891">
    <property type="entry name" value="PYR_CT"/>
</dbReference>
<dbReference type="InterPro" id="IPR019887">
    <property type="entry name" value="Tscrpt_reg_AsnC/Lrp_C"/>
</dbReference>
<dbReference type="NCBIfam" id="TIGR02146">
    <property type="entry name" value="LysS_fung_arch"/>
    <property type="match status" value="1"/>
</dbReference>
<dbReference type="NCBIfam" id="NF002085">
    <property type="entry name" value="PRK00915.1-2"/>
    <property type="match status" value="1"/>
</dbReference>
<dbReference type="PANTHER" id="PTHR10277:SF63">
    <property type="entry name" value="HOMOCITRATE SYNTHASE"/>
    <property type="match status" value="1"/>
</dbReference>
<dbReference type="PANTHER" id="PTHR10277">
    <property type="entry name" value="HOMOCITRATE SYNTHASE-RELATED"/>
    <property type="match status" value="1"/>
</dbReference>
<dbReference type="Pfam" id="PF01037">
    <property type="entry name" value="AsnC_trans_reg"/>
    <property type="match status" value="1"/>
</dbReference>
<dbReference type="Pfam" id="PF22617">
    <property type="entry name" value="HCS_D2"/>
    <property type="match status" value="1"/>
</dbReference>
<dbReference type="Pfam" id="PF00682">
    <property type="entry name" value="HMGL-like"/>
    <property type="match status" value="1"/>
</dbReference>
<dbReference type="SUPFAM" id="SSF51569">
    <property type="entry name" value="Aldolase"/>
    <property type="match status" value="1"/>
</dbReference>
<dbReference type="SUPFAM" id="SSF54909">
    <property type="entry name" value="Dimeric alpha+beta barrel"/>
    <property type="match status" value="1"/>
</dbReference>
<dbReference type="PROSITE" id="PS00816">
    <property type="entry name" value="AIPM_HOMOCIT_SYNTH_2"/>
    <property type="match status" value="1"/>
</dbReference>
<dbReference type="PROSITE" id="PS50991">
    <property type="entry name" value="PYR_CT"/>
    <property type="match status" value="1"/>
</dbReference>
<organism>
    <name type="scientific">Sulfurisphaera tokodaii (strain DSM 16993 / JCM 10545 / NBRC 100140 / 7)</name>
    <name type="common">Sulfolobus tokodaii</name>
    <dbReference type="NCBI Taxonomy" id="273063"/>
    <lineage>
        <taxon>Archaea</taxon>
        <taxon>Thermoproteota</taxon>
        <taxon>Thermoprotei</taxon>
        <taxon>Sulfolobales</taxon>
        <taxon>Sulfolobaceae</taxon>
        <taxon>Sulfurisphaera</taxon>
    </lineage>
</organism>
<accession>Q971S5</accession>
<keyword id="KW-0012">Acyltransferase</keyword>
<keyword id="KW-0021">Allosteric enzyme</keyword>
<keyword id="KW-0028">Amino-acid biosynthesis</keyword>
<keyword id="KW-0457">Lysine biosynthesis</keyword>
<keyword id="KW-0460">Magnesium</keyword>
<keyword id="KW-0464">Manganese</keyword>
<keyword id="KW-0479">Metal-binding</keyword>
<keyword id="KW-1185">Reference proteome</keyword>
<keyword id="KW-0808">Transferase</keyword>
<name>HOSA_SULTO</name>
<reference key="1">
    <citation type="journal article" date="2001" name="DNA Res.">
        <title>Complete genome sequence of an aerobic thermoacidophilic Crenarchaeon, Sulfolobus tokodaii strain7.</title>
        <authorList>
            <person name="Kawarabayasi Y."/>
            <person name="Hino Y."/>
            <person name="Horikawa H."/>
            <person name="Jin-no K."/>
            <person name="Takahashi M."/>
            <person name="Sekine M."/>
            <person name="Baba S."/>
            <person name="Ankai A."/>
            <person name="Kosugi H."/>
            <person name="Hosoyama A."/>
            <person name="Fukui S."/>
            <person name="Nagai Y."/>
            <person name="Nishijima K."/>
            <person name="Otsuka R."/>
            <person name="Nakazawa H."/>
            <person name="Takamiya M."/>
            <person name="Kato Y."/>
            <person name="Yoshizawa T."/>
            <person name="Tanaka T."/>
            <person name="Kudoh Y."/>
            <person name="Yamazaki J."/>
            <person name="Kushida N."/>
            <person name="Oguchi A."/>
            <person name="Aoki K."/>
            <person name="Masuda S."/>
            <person name="Yanagii M."/>
            <person name="Nishimura M."/>
            <person name="Yamagishi A."/>
            <person name="Oshima T."/>
            <person name="Kikuchi H."/>
        </authorList>
    </citation>
    <scope>NUCLEOTIDE SEQUENCE [LARGE SCALE GENOMIC DNA]</scope>
    <source>
        <strain>DSM 16993 / JCM 10545 / NBRC 100140 / 7</strain>
    </source>
</reference>
<reference key="2">
    <citation type="journal article" date="2020" name="FEBS Lett.">
        <title>Biochemical characterization of archaeal homocitrate synthase from Sulfolobus acidocaldarius.</title>
        <authorList>
            <person name="Suzuki T."/>
            <person name="Akiyama N."/>
            <person name="Yoshida A."/>
            <person name="Tomita T."/>
            <person name="Lassak K."/>
            <person name="Haurat M.F."/>
            <person name="Okada T."/>
            <person name="Takahashi K."/>
            <person name="Albers S.V."/>
            <person name="Kuzuyama T."/>
            <person name="Nishiyama M."/>
        </authorList>
    </citation>
    <scope>FUNCTION</scope>
    <scope>CATALYTIC ACTIVITY</scope>
    <scope>BIOPHYSICOCHEMICAL PROPERTIES</scope>
    <scope>ACTIVITY REGULATION</scope>
    <scope>PATHWAY</scope>
    <scope>DOMAIN</scope>
    <scope>SUBUNIT</scope>
</reference>